<sequence length="206" mass="23307">MGEHWALGPEAGSSLLLCSALLAVGCALGLRLGRGRSAVERWVLAWLCYDSLVHFVLEGAFVYLSIVGNVADSQGLIASLWKEYGKADTRWLYSDPTVVSLEILTVVLDGLLALVLIYAIVKEKYYRHFVQIVLCVCELYGCWMTFFPEWLVGSPSLNTSSWLYLWVYLVFFNGLWVLIPGLLLWQSWVELKKRDSQEANLAKKHK</sequence>
<reference key="1">
    <citation type="journal article" date="2003" name="Biochem. J.">
        <title>Cloning of an emopamil-binding protein (EBP)-like protein that lacks sterol delta8-delta7 isomerase activity.</title>
        <authorList>
            <person name="Moebius F.F."/>
            <person name="Fitzky B.U."/>
            <person name="Wietzorrek G."/>
            <person name="Haidekker A."/>
            <person name="Eder A."/>
            <person name="Glossmann H."/>
        </authorList>
    </citation>
    <scope>NUCLEOTIDE SEQUENCE [MRNA]</scope>
    <source>
        <strain>C57BL/6J</strain>
    </source>
</reference>
<reference key="2">
    <citation type="journal article" date="2005" name="Science">
        <title>The transcriptional landscape of the mammalian genome.</title>
        <authorList>
            <person name="Carninci P."/>
            <person name="Kasukawa T."/>
            <person name="Katayama S."/>
            <person name="Gough J."/>
            <person name="Frith M.C."/>
            <person name="Maeda N."/>
            <person name="Oyama R."/>
            <person name="Ravasi T."/>
            <person name="Lenhard B."/>
            <person name="Wells C."/>
            <person name="Kodzius R."/>
            <person name="Shimokawa K."/>
            <person name="Bajic V.B."/>
            <person name="Brenner S.E."/>
            <person name="Batalov S."/>
            <person name="Forrest A.R."/>
            <person name="Zavolan M."/>
            <person name="Davis M.J."/>
            <person name="Wilming L.G."/>
            <person name="Aidinis V."/>
            <person name="Allen J.E."/>
            <person name="Ambesi-Impiombato A."/>
            <person name="Apweiler R."/>
            <person name="Aturaliya R.N."/>
            <person name="Bailey T.L."/>
            <person name="Bansal M."/>
            <person name="Baxter L."/>
            <person name="Beisel K.W."/>
            <person name="Bersano T."/>
            <person name="Bono H."/>
            <person name="Chalk A.M."/>
            <person name="Chiu K.P."/>
            <person name="Choudhary V."/>
            <person name="Christoffels A."/>
            <person name="Clutterbuck D.R."/>
            <person name="Crowe M.L."/>
            <person name="Dalla E."/>
            <person name="Dalrymple B.P."/>
            <person name="de Bono B."/>
            <person name="Della Gatta G."/>
            <person name="di Bernardo D."/>
            <person name="Down T."/>
            <person name="Engstrom P."/>
            <person name="Fagiolini M."/>
            <person name="Faulkner G."/>
            <person name="Fletcher C.F."/>
            <person name="Fukushima T."/>
            <person name="Furuno M."/>
            <person name="Futaki S."/>
            <person name="Gariboldi M."/>
            <person name="Georgii-Hemming P."/>
            <person name="Gingeras T.R."/>
            <person name="Gojobori T."/>
            <person name="Green R.E."/>
            <person name="Gustincich S."/>
            <person name="Harbers M."/>
            <person name="Hayashi Y."/>
            <person name="Hensch T.K."/>
            <person name="Hirokawa N."/>
            <person name="Hill D."/>
            <person name="Huminiecki L."/>
            <person name="Iacono M."/>
            <person name="Ikeo K."/>
            <person name="Iwama A."/>
            <person name="Ishikawa T."/>
            <person name="Jakt M."/>
            <person name="Kanapin A."/>
            <person name="Katoh M."/>
            <person name="Kawasawa Y."/>
            <person name="Kelso J."/>
            <person name="Kitamura H."/>
            <person name="Kitano H."/>
            <person name="Kollias G."/>
            <person name="Krishnan S.P."/>
            <person name="Kruger A."/>
            <person name="Kummerfeld S.K."/>
            <person name="Kurochkin I.V."/>
            <person name="Lareau L.F."/>
            <person name="Lazarevic D."/>
            <person name="Lipovich L."/>
            <person name="Liu J."/>
            <person name="Liuni S."/>
            <person name="McWilliam S."/>
            <person name="Madan Babu M."/>
            <person name="Madera M."/>
            <person name="Marchionni L."/>
            <person name="Matsuda H."/>
            <person name="Matsuzawa S."/>
            <person name="Miki H."/>
            <person name="Mignone F."/>
            <person name="Miyake S."/>
            <person name="Morris K."/>
            <person name="Mottagui-Tabar S."/>
            <person name="Mulder N."/>
            <person name="Nakano N."/>
            <person name="Nakauchi H."/>
            <person name="Ng P."/>
            <person name="Nilsson R."/>
            <person name="Nishiguchi S."/>
            <person name="Nishikawa S."/>
            <person name="Nori F."/>
            <person name="Ohara O."/>
            <person name="Okazaki Y."/>
            <person name="Orlando V."/>
            <person name="Pang K.C."/>
            <person name="Pavan W.J."/>
            <person name="Pavesi G."/>
            <person name="Pesole G."/>
            <person name="Petrovsky N."/>
            <person name="Piazza S."/>
            <person name="Reed J."/>
            <person name="Reid J.F."/>
            <person name="Ring B.Z."/>
            <person name="Ringwald M."/>
            <person name="Rost B."/>
            <person name="Ruan Y."/>
            <person name="Salzberg S.L."/>
            <person name="Sandelin A."/>
            <person name="Schneider C."/>
            <person name="Schoenbach C."/>
            <person name="Sekiguchi K."/>
            <person name="Semple C.A."/>
            <person name="Seno S."/>
            <person name="Sessa L."/>
            <person name="Sheng Y."/>
            <person name="Shibata Y."/>
            <person name="Shimada H."/>
            <person name="Shimada K."/>
            <person name="Silva D."/>
            <person name="Sinclair B."/>
            <person name="Sperling S."/>
            <person name="Stupka E."/>
            <person name="Sugiura K."/>
            <person name="Sultana R."/>
            <person name="Takenaka Y."/>
            <person name="Taki K."/>
            <person name="Tammoja K."/>
            <person name="Tan S.L."/>
            <person name="Tang S."/>
            <person name="Taylor M.S."/>
            <person name="Tegner J."/>
            <person name="Teichmann S.A."/>
            <person name="Ueda H.R."/>
            <person name="van Nimwegen E."/>
            <person name="Verardo R."/>
            <person name="Wei C.L."/>
            <person name="Yagi K."/>
            <person name="Yamanishi H."/>
            <person name="Zabarovsky E."/>
            <person name="Zhu S."/>
            <person name="Zimmer A."/>
            <person name="Hide W."/>
            <person name="Bult C."/>
            <person name="Grimmond S.M."/>
            <person name="Teasdale R.D."/>
            <person name="Liu E.T."/>
            <person name="Brusic V."/>
            <person name="Quackenbush J."/>
            <person name="Wahlestedt C."/>
            <person name="Mattick J.S."/>
            <person name="Hume D.A."/>
            <person name="Kai C."/>
            <person name="Sasaki D."/>
            <person name="Tomaru Y."/>
            <person name="Fukuda S."/>
            <person name="Kanamori-Katayama M."/>
            <person name="Suzuki M."/>
            <person name="Aoki J."/>
            <person name="Arakawa T."/>
            <person name="Iida J."/>
            <person name="Imamura K."/>
            <person name="Itoh M."/>
            <person name="Kato T."/>
            <person name="Kawaji H."/>
            <person name="Kawagashira N."/>
            <person name="Kawashima T."/>
            <person name="Kojima M."/>
            <person name="Kondo S."/>
            <person name="Konno H."/>
            <person name="Nakano K."/>
            <person name="Ninomiya N."/>
            <person name="Nishio T."/>
            <person name="Okada M."/>
            <person name="Plessy C."/>
            <person name="Shibata K."/>
            <person name="Shiraki T."/>
            <person name="Suzuki S."/>
            <person name="Tagami M."/>
            <person name="Waki K."/>
            <person name="Watahiki A."/>
            <person name="Okamura-Oho Y."/>
            <person name="Suzuki H."/>
            <person name="Kawai J."/>
            <person name="Hayashizaki Y."/>
        </authorList>
    </citation>
    <scope>NUCLEOTIDE SEQUENCE [LARGE SCALE MRNA]</scope>
    <source>
        <strain>C57BL/6J</strain>
        <tissue>Egg</tissue>
        <tissue>Embryo</tissue>
    </source>
</reference>
<reference key="3">
    <citation type="journal article" date="2004" name="Genome Res.">
        <title>The status, quality, and expansion of the NIH full-length cDNA project: the Mammalian Gene Collection (MGC).</title>
        <authorList>
            <consortium name="The MGC Project Team"/>
        </authorList>
    </citation>
    <scope>NUCLEOTIDE SEQUENCE [LARGE SCALE MRNA]</scope>
    <source>
        <strain>C57BL/6J</strain>
        <tissue>Mammary gland</tissue>
    </source>
</reference>
<accession>Q9D0P0</accession>
<accession>Q3TQR1</accession>
<accession>Q9CRQ2</accession>
<accession>Q9CY81</accession>
<keyword id="KW-0256">Endoplasmic reticulum</keyword>
<keyword id="KW-0472">Membrane</keyword>
<keyword id="KW-1185">Reference proteome</keyword>
<keyword id="KW-0812">Transmembrane</keyword>
<keyword id="KW-1133">Transmembrane helix</keyword>
<protein>
    <recommendedName>
        <fullName>Emopamil-binding protein-like</fullName>
    </recommendedName>
    <alternativeName>
        <fullName>Emopamil-binding-related protein</fullName>
    </alternativeName>
</protein>
<comment type="function">
    <text evidence="1">Does not possess sterol isomerase activity and does not bind sigma ligands.</text>
</comment>
<comment type="subunit">
    <text evidence="1">Homodimer.</text>
</comment>
<comment type="subcellular location">
    <subcellularLocation>
        <location evidence="1">Endoplasmic reticulum membrane</location>
        <topology evidence="1">Multi-pass membrane protein</topology>
    </subcellularLocation>
</comment>
<comment type="similarity">
    <text evidence="4">Belongs to the EBP family.</text>
</comment>
<gene>
    <name type="primary">Ebpl</name>
    <name type="synonym">Ebrp</name>
    <name type="synonym">Erp</name>
</gene>
<proteinExistence type="evidence at transcript level"/>
<dbReference type="EMBL" id="AF243434">
    <property type="protein sequence ID" value="AAK28349.2"/>
    <property type="molecule type" value="mRNA"/>
</dbReference>
<dbReference type="EMBL" id="AK011237">
    <property type="protein sequence ID" value="BAB27485.1"/>
    <property type="molecule type" value="mRNA"/>
</dbReference>
<dbReference type="EMBL" id="AK019140">
    <property type="protein sequence ID" value="BAB31565.1"/>
    <property type="molecule type" value="mRNA"/>
</dbReference>
<dbReference type="EMBL" id="AK019963">
    <property type="protein sequence ID" value="BAB31938.1"/>
    <property type="molecule type" value="mRNA"/>
</dbReference>
<dbReference type="EMBL" id="AK163371">
    <property type="protein sequence ID" value="BAE37321.1"/>
    <property type="molecule type" value="mRNA"/>
</dbReference>
<dbReference type="EMBL" id="BC027422">
    <property type="protein sequence ID" value="AAH27422.1"/>
    <property type="molecule type" value="mRNA"/>
</dbReference>
<dbReference type="CCDS" id="CCDS27183.1"/>
<dbReference type="RefSeq" id="NP_080874.2">
    <property type="nucleotide sequence ID" value="NM_026598.3"/>
</dbReference>
<dbReference type="SMR" id="Q9D0P0"/>
<dbReference type="BioGRID" id="212703">
    <property type="interactions" value="2"/>
</dbReference>
<dbReference type="FunCoup" id="Q9D0P0">
    <property type="interactions" value="319"/>
</dbReference>
<dbReference type="STRING" id="10090.ENSMUSP00000022494"/>
<dbReference type="SwissPalm" id="Q9D0P0"/>
<dbReference type="jPOST" id="Q9D0P0"/>
<dbReference type="PaxDb" id="10090-ENSMUSP00000022494"/>
<dbReference type="ProteomicsDB" id="277795"/>
<dbReference type="Antibodypedia" id="53037">
    <property type="antibodies" value="60 antibodies from 12 providers"/>
</dbReference>
<dbReference type="DNASU" id="68177"/>
<dbReference type="Ensembl" id="ENSMUST00000022494.10">
    <property type="protein sequence ID" value="ENSMUSP00000022494.9"/>
    <property type="gene ID" value="ENSMUSG00000021928.10"/>
</dbReference>
<dbReference type="GeneID" id="68177"/>
<dbReference type="KEGG" id="mmu:68177"/>
<dbReference type="UCSC" id="uc007ufv.2">
    <property type="organism name" value="mouse"/>
</dbReference>
<dbReference type="AGR" id="MGI:1915427"/>
<dbReference type="CTD" id="84650"/>
<dbReference type="MGI" id="MGI:1915427">
    <property type="gene designation" value="Ebpl"/>
</dbReference>
<dbReference type="VEuPathDB" id="HostDB:ENSMUSG00000021928"/>
<dbReference type="eggNOG" id="KOG4826">
    <property type="taxonomic scope" value="Eukaryota"/>
</dbReference>
<dbReference type="GeneTree" id="ENSGT00530000063715"/>
<dbReference type="HOGENOM" id="CLU_072128_1_1_1"/>
<dbReference type="InParanoid" id="Q9D0P0"/>
<dbReference type="OMA" id="VYLWLYL"/>
<dbReference type="OrthoDB" id="58557at2759"/>
<dbReference type="PhylomeDB" id="Q9D0P0"/>
<dbReference type="TreeFam" id="TF314716"/>
<dbReference type="BioGRID-ORCS" id="68177">
    <property type="hits" value="1 hit in 79 CRISPR screens"/>
</dbReference>
<dbReference type="ChiTaRS" id="Ebpl">
    <property type="organism name" value="mouse"/>
</dbReference>
<dbReference type="PRO" id="PR:Q9D0P0"/>
<dbReference type="Proteomes" id="UP000000589">
    <property type="component" value="Chromosome 14"/>
</dbReference>
<dbReference type="RNAct" id="Q9D0P0">
    <property type="molecule type" value="protein"/>
</dbReference>
<dbReference type="Bgee" id="ENSMUSG00000021928">
    <property type="expression patterns" value="Expressed in retinal neural layer and 66 other cell types or tissues"/>
</dbReference>
<dbReference type="GO" id="GO:0005789">
    <property type="term" value="C:endoplasmic reticulum membrane"/>
    <property type="evidence" value="ECO:0007669"/>
    <property type="project" value="UniProtKB-SubCell"/>
</dbReference>
<dbReference type="GO" id="GO:0047750">
    <property type="term" value="F:cholestenol delta-isomerase activity"/>
    <property type="evidence" value="ECO:0007669"/>
    <property type="project" value="InterPro"/>
</dbReference>
<dbReference type="GO" id="GO:0016125">
    <property type="term" value="P:sterol metabolic process"/>
    <property type="evidence" value="ECO:0007669"/>
    <property type="project" value="InterPro"/>
</dbReference>
<dbReference type="InterPro" id="IPR007905">
    <property type="entry name" value="EBP"/>
</dbReference>
<dbReference type="InterPro" id="IPR033118">
    <property type="entry name" value="EXPERA"/>
</dbReference>
<dbReference type="PANTHER" id="PTHR14207:SF1">
    <property type="entry name" value="EMOPAMIL-BINDING PROTEIN-LIKE"/>
    <property type="match status" value="1"/>
</dbReference>
<dbReference type="PANTHER" id="PTHR14207">
    <property type="entry name" value="STEROL ISOMERASE"/>
    <property type="match status" value="1"/>
</dbReference>
<dbReference type="Pfam" id="PF05241">
    <property type="entry name" value="EBP"/>
    <property type="match status" value="1"/>
</dbReference>
<dbReference type="PROSITE" id="PS51751">
    <property type="entry name" value="EXPERA"/>
    <property type="match status" value="1"/>
</dbReference>
<name>EBPL_MOUSE</name>
<organism>
    <name type="scientific">Mus musculus</name>
    <name type="common">Mouse</name>
    <dbReference type="NCBI Taxonomy" id="10090"/>
    <lineage>
        <taxon>Eukaryota</taxon>
        <taxon>Metazoa</taxon>
        <taxon>Chordata</taxon>
        <taxon>Craniata</taxon>
        <taxon>Vertebrata</taxon>
        <taxon>Euteleostomi</taxon>
        <taxon>Mammalia</taxon>
        <taxon>Eutheria</taxon>
        <taxon>Euarchontoglires</taxon>
        <taxon>Glires</taxon>
        <taxon>Rodentia</taxon>
        <taxon>Myomorpha</taxon>
        <taxon>Muroidea</taxon>
        <taxon>Muridae</taxon>
        <taxon>Murinae</taxon>
        <taxon>Mus</taxon>
        <taxon>Mus</taxon>
    </lineage>
</organism>
<evidence type="ECO:0000250" key="1"/>
<evidence type="ECO:0000255" key="2"/>
<evidence type="ECO:0000255" key="3">
    <source>
        <dbReference type="PROSITE-ProRule" id="PRU01087"/>
    </source>
</evidence>
<evidence type="ECO:0000305" key="4"/>
<feature type="chain" id="PRO_0000174348" description="Emopamil-binding protein-like">
    <location>
        <begin position="1"/>
        <end position="206"/>
    </location>
</feature>
<feature type="transmembrane region" description="Helical" evidence="2">
    <location>
        <begin position="10"/>
        <end position="30"/>
    </location>
</feature>
<feature type="transmembrane region" description="Helical" evidence="2">
    <location>
        <begin position="42"/>
        <end position="62"/>
    </location>
</feature>
<feature type="transmembrane region" description="Helical" evidence="2">
    <location>
        <begin position="101"/>
        <end position="121"/>
    </location>
</feature>
<feature type="transmembrane region" description="Helical" evidence="2">
    <location>
        <begin position="165"/>
        <end position="185"/>
    </location>
</feature>
<feature type="domain" description="EXPERA" evidence="3">
    <location>
        <begin position="39"/>
        <end position="184"/>
    </location>
</feature>
<feature type="sequence conflict" description="In Ref. 1; AAK28349." evidence="4" ref="1">
    <original>PEA</original>
    <variation>SEQ</variation>
    <location>
        <begin position="9"/>
        <end position="11"/>
    </location>
</feature>
<feature type="sequence conflict" description="In Ref. 2; BAB31565." evidence="4" ref="2">
    <original>L</original>
    <variation>R</variation>
    <location>
        <position position="32"/>
    </location>
</feature>
<feature type="sequence conflict" description="In Ref. 2; BAB31938." evidence="4" ref="2">
    <original>S</original>
    <variation>T</variation>
    <location>
        <position position="156"/>
    </location>
</feature>